<dbReference type="EMBL" id="AE005674">
    <property type="protein sequence ID" value="AAN43034.1"/>
    <property type="molecule type" value="Genomic_DNA"/>
</dbReference>
<dbReference type="EMBL" id="AE014073">
    <property type="protein sequence ID" value="AAP16929.1"/>
    <property type="molecule type" value="Genomic_DNA"/>
</dbReference>
<dbReference type="RefSeq" id="NP_707327.1">
    <property type="nucleotide sequence ID" value="NC_004337.2"/>
</dbReference>
<dbReference type="RefSeq" id="WP_000460707.1">
    <property type="nucleotide sequence ID" value="NZ_WPGW01000158.1"/>
</dbReference>
<dbReference type="PaxDb" id="198214-SF1435"/>
<dbReference type="GeneID" id="1023392"/>
<dbReference type="KEGG" id="sfl:SF1435"/>
<dbReference type="KEGG" id="sfx:S1550"/>
<dbReference type="PATRIC" id="fig|198214.7.peg.1691"/>
<dbReference type="HOGENOM" id="CLU_125889_0_0_6"/>
<dbReference type="Proteomes" id="UP000001006">
    <property type="component" value="Chromosome"/>
</dbReference>
<dbReference type="Proteomes" id="UP000002673">
    <property type="component" value="Chromosome"/>
</dbReference>
<dbReference type="GO" id="GO:0005886">
    <property type="term" value="C:plasma membrane"/>
    <property type="evidence" value="ECO:0007669"/>
    <property type="project" value="UniProtKB-SubCell"/>
</dbReference>
<dbReference type="HAMAP" id="MF_01874">
    <property type="entry name" value="UPF0756"/>
    <property type="match status" value="1"/>
</dbReference>
<dbReference type="InterPro" id="IPR007382">
    <property type="entry name" value="UPF0756_TM"/>
</dbReference>
<dbReference type="PANTHER" id="PTHR38452">
    <property type="entry name" value="UPF0756 MEMBRANE PROTEIN YEAL"/>
    <property type="match status" value="1"/>
</dbReference>
<dbReference type="PANTHER" id="PTHR38452:SF1">
    <property type="entry name" value="UPF0756 MEMBRANE PROTEIN YEAL"/>
    <property type="match status" value="1"/>
</dbReference>
<dbReference type="Pfam" id="PF04284">
    <property type="entry name" value="DUF441"/>
    <property type="match status" value="1"/>
</dbReference>
<protein>
    <recommendedName>
        <fullName evidence="1">UPF0756 membrane protein YeaL</fullName>
    </recommendedName>
</protein>
<evidence type="ECO:0000255" key="1">
    <source>
        <dbReference type="HAMAP-Rule" id="MF_01874"/>
    </source>
</evidence>
<keyword id="KW-1003">Cell membrane</keyword>
<keyword id="KW-0472">Membrane</keyword>
<keyword id="KW-1185">Reference proteome</keyword>
<keyword id="KW-0812">Transmembrane</keyword>
<keyword id="KW-1133">Transmembrane helix</keyword>
<feature type="chain" id="PRO_0000169021" description="UPF0756 membrane protein YeaL">
    <location>
        <begin position="1"/>
        <end position="148"/>
    </location>
</feature>
<feature type="transmembrane region" description="Helical" evidence="1">
    <location>
        <begin position="14"/>
        <end position="34"/>
    </location>
</feature>
<feature type="transmembrane region" description="Helical" evidence="1">
    <location>
        <begin position="51"/>
        <end position="71"/>
    </location>
</feature>
<feature type="transmembrane region" description="Helical" evidence="1">
    <location>
        <begin position="86"/>
        <end position="106"/>
    </location>
</feature>
<feature type="transmembrane region" description="Helical" evidence="1">
    <location>
        <begin position="121"/>
        <end position="141"/>
    </location>
</feature>
<reference key="1">
    <citation type="journal article" date="2002" name="Nucleic Acids Res.">
        <title>Genome sequence of Shigella flexneri 2a: insights into pathogenicity through comparison with genomes of Escherichia coli K12 and O157.</title>
        <authorList>
            <person name="Jin Q."/>
            <person name="Yuan Z."/>
            <person name="Xu J."/>
            <person name="Wang Y."/>
            <person name="Shen Y."/>
            <person name="Lu W."/>
            <person name="Wang J."/>
            <person name="Liu H."/>
            <person name="Yang J."/>
            <person name="Yang F."/>
            <person name="Zhang X."/>
            <person name="Zhang J."/>
            <person name="Yang G."/>
            <person name="Wu H."/>
            <person name="Qu D."/>
            <person name="Dong J."/>
            <person name="Sun L."/>
            <person name="Xue Y."/>
            <person name="Zhao A."/>
            <person name="Gao Y."/>
            <person name="Zhu J."/>
            <person name="Kan B."/>
            <person name="Ding K."/>
            <person name="Chen S."/>
            <person name="Cheng H."/>
            <person name="Yao Z."/>
            <person name="He B."/>
            <person name="Chen R."/>
            <person name="Ma D."/>
            <person name="Qiang B."/>
            <person name="Wen Y."/>
            <person name="Hou Y."/>
            <person name="Yu J."/>
        </authorList>
    </citation>
    <scope>NUCLEOTIDE SEQUENCE [LARGE SCALE GENOMIC DNA]</scope>
    <source>
        <strain>301 / Serotype 2a</strain>
    </source>
</reference>
<reference key="2">
    <citation type="journal article" date="2003" name="Infect. Immun.">
        <title>Complete genome sequence and comparative genomics of Shigella flexneri serotype 2a strain 2457T.</title>
        <authorList>
            <person name="Wei J."/>
            <person name="Goldberg M.B."/>
            <person name="Burland V."/>
            <person name="Venkatesan M.M."/>
            <person name="Deng W."/>
            <person name="Fournier G."/>
            <person name="Mayhew G.F."/>
            <person name="Plunkett G. III"/>
            <person name="Rose D.J."/>
            <person name="Darling A."/>
            <person name="Mau B."/>
            <person name="Perna N.T."/>
            <person name="Payne S.M."/>
            <person name="Runyen-Janecky L.J."/>
            <person name="Zhou S."/>
            <person name="Schwartz D.C."/>
            <person name="Blattner F.R."/>
        </authorList>
    </citation>
    <scope>NUCLEOTIDE SEQUENCE [LARGE SCALE GENOMIC DNA]</scope>
    <source>
        <strain>ATCC 700930 / 2457T / Serotype 2a</strain>
    </source>
</reference>
<organism>
    <name type="scientific">Shigella flexneri</name>
    <dbReference type="NCBI Taxonomy" id="623"/>
    <lineage>
        <taxon>Bacteria</taxon>
        <taxon>Pseudomonadati</taxon>
        <taxon>Pseudomonadota</taxon>
        <taxon>Gammaproteobacteria</taxon>
        <taxon>Enterobacterales</taxon>
        <taxon>Enterobacteriaceae</taxon>
        <taxon>Shigella</taxon>
    </lineage>
</organism>
<name>YEAL_SHIFL</name>
<proteinExistence type="inferred from homology"/>
<accession>P0ACY8</accession>
<accession>O07965</accession>
<accession>O07967</accession>
<accession>P76240</accession>
<gene>
    <name evidence="1" type="primary">yeaL</name>
    <name type="ordered locus">SF1435</name>
    <name type="ordered locus">S1550</name>
</gene>
<sequence>MFDVTLLILLGLAALGFISHNTTVAVSILVLIIVRVTPLSTFFPWIEKQGLSIGIIILTIGVMAPIASGTLPPSTLIHSFLNWKSLVAIAVGVIVSWLGGRGVTLMGSQPQLVAGLLVGTVLGVALFRGVPVGPLIAAGLVSLIVGKQ</sequence>
<comment type="subcellular location">
    <subcellularLocation>
        <location evidence="1">Cell membrane</location>
        <topology evidence="1">Multi-pass membrane protein</topology>
    </subcellularLocation>
</comment>
<comment type="similarity">
    <text evidence="1">Belongs to the UPF0756 family.</text>
</comment>